<protein>
    <recommendedName>
        <fullName>Endochitinase A1</fullName>
        <ecNumber>3.2.1.14</ecNumber>
    </recommendedName>
</protein>
<sequence length="15" mass="1439">EQCGNQAGGXVPPNG</sequence>
<name>CHI1_PEA</name>
<accession>P21225</accession>
<proteinExistence type="evidence at protein level"/>
<reference key="1">
    <citation type="journal article" date="1991" name="Planta">
        <title>Induction, purification and characterization of chitinase isolated from pea leaves inoculated with Ascochyta pisi.</title>
        <authorList>
            <person name="Vad K."/>
            <person name="Mikkelsen J.D."/>
            <person name="Collinge D.B."/>
        </authorList>
    </citation>
    <scope>PROTEIN SEQUENCE</scope>
    <source>
        <strain>cv. Birte</strain>
        <tissue>Leaf</tissue>
    </source>
</reference>
<organism>
    <name type="scientific">Pisum sativum</name>
    <name type="common">Garden pea</name>
    <name type="synonym">Lathyrus oleraceus</name>
    <dbReference type="NCBI Taxonomy" id="3888"/>
    <lineage>
        <taxon>Eukaryota</taxon>
        <taxon>Viridiplantae</taxon>
        <taxon>Streptophyta</taxon>
        <taxon>Embryophyta</taxon>
        <taxon>Tracheophyta</taxon>
        <taxon>Spermatophyta</taxon>
        <taxon>Magnoliopsida</taxon>
        <taxon>eudicotyledons</taxon>
        <taxon>Gunneridae</taxon>
        <taxon>Pentapetalae</taxon>
        <taxon>rosids</taxon>
        <taxon>fabids</taxon>
        <taxon>Fabales</taxon>
        <taxon>Fabaceae</taxon>
        <taxon>Papilionoideae</taxon>
        <taxon>50 kb inversion clade</taxon>
        <taxon>NPAAA clade</taxon>
        <taxon>Hologalegina</taxon>
        <taxon>IRL clade</taxon>
        <taxon>Fabeae</taxon>
        <taxon>Pisum</taxon>
    </lineage>
</organism>
<evidence type="ECO:0000305" key="1"/>
<feature type="chain" id="PRO_0000124828" description="Endochitinase A1">
    <location>
        <begin position="1"/>
        <end position="15" status="greater than"/>
    </location>
</feature>
<feature type="non-terminal residue">
    <location>
        <position position="15"/>
    </location>
</feature>
<dbReference type="EC" id="3.2.1.14"/>
<dbReference type="GO" id="GO:0008843">
    <property type="term" value="F:endochitinase activity"/>
    <property type="evidence" value="ECO:0007669"/>
    <property type="project" value="UniProtKB-EC"/>
</dbReference>
<dbReference type="GO" id="GO:0006032">
    <property type="term" value="P:chitin catabolic process"/>
    <property type="evidence" value="ECO:0007669"/>
    <property type="project" value="UniProtKB-KW"/>
</dbReference>
<dbReference type="GO" id="GO:0006952">
    <property type="term" value="P:defense response"/>
    <property type="evidence" value="ECO:0007669"/>
    <property type="project" value="UniProtKB-KW"/>
</dbReference>
<dbReference type="GO" id="GO:0000272">
    <property type="term" value="P:polysaccharide catabolic process"/>
    <property type="evidence" value="ECO:0007669"/>
    <property type="project" value="UniProtKB-KW"/>
</dbReference>
<keyword id="KW-0119">Carbohydrate metabolism</keyword>
<keyword id="KW-0146">Chitin degradation</keyword>
<keyword id="KW-0903">Direct protein sequencing</keyword>
<keyword id="KW-0326">Glycosidase</keyword>
<keyword id="KW-0378">Hydrolase</keyword>
<keyword id="KW-0611">Plant defense</keyword>
<keyword id="KW-0624">Polysaccharide degradation</keyword>
<comment type="function">
    <text>Defense against chitin-containing fungal pathogens.</text>
</comment>
<comment type="catalytic activity">
    <reaction>
        <text>Random endo-hydrolysis of N-acetyl-beta-D-glucosaminide (1-&gt;4)-beta-linkages in chitin and chitodextrins.</text>
        <dbReference type="EC" id="3.2.1.14"/>
    </reaction>
</comment>
<comment type="induction">
    <text>By infection with the fungal pathogen Ascochyta pisi.</text>
</comment>
<comment type="similarity">
    <text evidence="1">Belongs to the glycosyl hydrolase 19 family. Chitinase class I subfamily.</text>
</comment>